<protein>
    <recommendedName>
        <fullName>Nascent polypeptide-associated complex subunit beta</fullName>
        <shortName>NAC-beta</shortName>
    </recommendedName>
    <alternativeName>
        <fullName>Beta-NAC</fullName>
    </alternativeName>
</protein>
<dbReference type="EMBL" id="AE017348">
    <property type="protein sequence ID" value="AAW44989.1"/>
    <property type="molecule type" value="Genomic_DNA"/>
</dbReference>
<dbReference type="RefSeq" id="XP_572296.1">
    <property type="nucleotide sequence ID" value="XM_572296.1"/>
</dbReference>
<dbReference type="SMR" id="P0CP08"/>
<dbReference type="FunCoup" id="P0CP08">
    <property type="interactions" value="630"/>
</dbReference>
<dbReference type="STRING" id="214684.P0CP08"/>
<dbReference type="PaxDb" id="214684-P0CP08"/>
<dbReference type="EnsemblFungi" id="AAW44989">
    <property type="protein sequence ID" value="AAW44989"/>
    <property type="gene ID" value="CNH01040"/>
</dbReference>
<dbReference type="GeneID" id="3259207"/>
<dbReference type="KEGG" id="cne:CNH01040"/>
<dbReference type="VEuPathDB" id="FungiDB:CNH01040"/>
<dbReference type="eggNOG" id="KOG2240">
    <property type="taxonomic scope" value="Eukaryota"/>
</dbReference>
<dbReference type="HOGENOM" id="CLU_098726_2_0_1"/>
<dbReference type="InParanoid" id="P0CP08"/>
<dbReference type="OMA" id="AGDTYME"/>
<dbReference type="OrthoDB" id="8033832at2759"/>
<dbReference type="Proteomes" id="UP000002149">
    <property type="component" value="Chromosome 8"/>
</dbReference>
<dbReference type="GO" id="GO:0005829">
    <property type="term" value="C:cytosol"/>
    <property type="evidence" value="ECO:0000318"/>
    <property type="project" value="GO_Central"/>
</dbReference>
<dbReference type="GO" id="GO:0005854">
    <property type="term" value="C:nascent polypeptide-associated complex"/>
    <property type="evidence" value="ECO:0000318"/>
    <property type="project" value="GO_Central"/>
</dbReference>
<dbReference type="GO" id="GO:0005634">
    <property type="term" value="C:nucleus"/>
    <property type="evidence" value="ECO:0007669"/>
    <property type="project" value="UniProtKB-SubCell"/>
</dbReference>
<dbReference type="GO" id="GO:0015031">
    <property type="term" value="P:protein transport"/>
    <property type="evidence" value="ECO:0007669"/>
    <property type="project" value="UniProtKB-KW"/>
</dbReference>
<dbReference type="CDD" id="cd22055">
    <property type="entry name" value="NAC_BTF3"/>
    <property type="match status" value="1"/>
</dbReference>
<dbReference type="FunFam" id="2.20.70.30:FF:000003">
    <property type="entry name" value="Nascent polypeptide-associated complex subunit beta"/>
    <property type="match status" value="1"/>
</dbReference>
<dbReference type="Gene3D" id="2.20.70.30">
    <property type="entry name" value="Nascent polypeptide-associated complex domain"/>
    <property type="match status" value="1"/>
</dbReference>
<dbReference type="InterPro" id="IPR039370">
    <property type="entry name" value="BTF3"/>
</dbReference>
<dbReference type="InterPro" id="IPR038187">
    <property type="entry name" value="NAC_A/B_dom_sf"/>
</dbReference>
<dbReference type="InterPro" id="IPR002715">
    <property type="entry name" value="Nas_poly-pep-assoc_cplx_dom"/>
</dbReference>
<dbReference type="PANTHER" id="PTHR10351">
    <property type="entry name" value="TRANSCRIPTION FACTOR BTF3 FAMILY MEMBER"/>
    <property type="match status" value="1"/>
</dbReference>
<dbReference type="Pfam" id="PF01849">
    <property type="entry name" value="NAC"/>
    <property type="match status" value="1"/>
</dbReference>
<dbReference type="SMART" id="SM01407">
    <property type="entry name" value="NAC"/>
    <property type="match status" value="1"/>
</dbReference>
<dbReference type="PROSITE" id="PS51151">
    <property type="entry name" value="NAC_AB"/>
    <property type="match status" value="1"/>
</dbReference>
<feature type="chain" id="PRO_0000273508" description="Nascent polypeptide-associated complex subunit beta">
    <location>
        <begin position="1"/>
        <end position="175"/>
    </location>
</feature>
<feature type="domain" description="NAC-A/B" evidence="2">
    <location>
        <begin position="34"/>
        <end position="101"/>
    </location>
</feature>
<feature type="region of interest" description="Disordered" evidence="3">
    <location>
        <begin position="1"/>
        <end position="36"/>
    </location>
</feature>
<feature type="region of interest" description="Disordered" evidence="3">
    <location>
        <begin position="129"/>
        <end position="175"/>
    </location>
</feature>
<feature type="compositionally biased region" description="Acidic residues" evidence="3">
    <location>
        <begin position="149"/>
        <end position="163"/>
    </location>
</feature>
<feature type="compositionally biased region" description="Basic and acidic residues" evidence="3">
    <location>
        <begin position="164"/>
        <end position="175"/>
    </location>
</feature>
<comment type="function">
    <text evidence="1">Component of the nascent polypeptide-associated complex (NAC), a dynamic component of the ribosomal exit tunnel, protecting the emerging polypeptides from interaction with other cytoplasmic proteins to ensure appropriate nascent protein targeting. The NAC complex also promotes mitochondrial protein import by enhancing productive ribosome interactions with the outer mitochondrial membrane and blocks the inappropriate interaction of ribosomes translating non-secretory nascent polypeptides with translocation sites in the membrane of the endoplasmic reticulum. EGD1 may act as a transcription factor that exert a negative effect on the expression of several genes that are transcribed by RNA polymerase II.</text>
</comment>
<comment type="subunit">
    <text evidence="1">Part of the nascent polypeptide-associated complex (NAC), consisting of EGD2 and EGD1. NAC associates with ribosomes via EGD1 (By similarity).</text>
</comment>
<comment type="subcellular location">
    <subcellularLocation>
        <location evidence="1">Cytoplasm</location>
    </subcellularLocation>
    <subcellularLocation>
        <location evidence="1">Nucleus</location>
    </subcellularLocation>
    <text evidence="1">Predominantly cytoplasmic, may also transiently localize to the nucleus.</text>
</comment>
<comment type="similarity">
    <text evidence="4">Belongs to the NAC-beta family.</text>
</comment>
<name>NACB_CRYNJ</name>
<proteinExistence type="inferred from homology"/>
<sequence length="175" mass="18645">MDKEKLAKLQSQVRIGGKGTPRRKVVKKSVTSSQGDDRKLQAALKKLGVQPITGVEEVNMFKEDGNVLHFGAPRVQVHAALPSNTLAIYGPGQTKELTELVPGILNQLGPDSLANLRRLAESYQSLTARQAAAAAGSGGEGAGEAKEGEGDDEIPDLVDNFDEAEVKKSDLEELE</sequence>
<evidence type="ECO:0000250" key="1"/>
<evidence type="ECO:0000255" key="2">
    <source>
        <dbReference type="PROSITE-ProRule" id="PRU00507"/>
    </source>
</evidence>
<evidence type="ECO:0000256" key="3">
    <source>
        <dbReference type="SAM" id="MobiDB-lite"/>
    </source>
</evidence>
<evidence type="ECO:0000305" key="4"/>
<gene>
    <name type="primary">EGD1</name>
    <name type="ordered locus">CNH01040</name>
</gene>
<keyword id="KW-0963">Cytoplasm</keyword>
<keyword id="KW-0539">Nucleus</keyword>
<keyword id="KW-0653">Protein transport</keyword>
<keyword id="KW-1185">Reference proteome</keyword>
<keyword id="KW-0678">Repressor</keyword>
<keyword id="KW-0804">Transcription</keyword>
<keyword id="KW-0805">Transcription regulation</keyword>
<keyword id="KW-0813">Transport</keyword>
<reference key="1">
    <citation type="journal article" date="2005" name="Science">
        <title>The genome of the basidiomycetous yeast and human pathogen Cryptococcus neoformans.</title>
        <authorList>
            <person name="Loftus B.J."/>
            <person name="Fung E."/>
            <person name="Roncaglia P."/>
            <person name="Rowley D."/>
            <person name="Amedeo P."/>
            <person name="Bruno D."/>
            <person name="Vamathevan J."/>
            <person name="Miranda M."/>
            <person name="Anderson I.J."/>
            <person name="Fraser J.A."/>
            <person name="Allen J.E."/>
            <person name="Bosdet I.E."/>
            <person name="Brent M.R."/>
            <person name="Chiu R."/>
            <person name="Doering T.L."/>
            <person name="Donlin M.J."/>
            <person name="D'Souza C.A."/>
            <person name="Fox D.S."/>
            <person name="Grinberg V."/>
            <person name="Fu J."/>
            <person name="Fukushima M."/>
            <person name="Haas B.J."/>
            <person name="Huang J.C."/>
            <person name="Janbon G."/>
            <person name="Jones S.J.M."/>
            <person name="Koo H.L."/>
            <person name="Krzywinski M.I."/>
            <person name="Kwon-Chung K.J."/>
            <person name="Lengeler K.B."/>
            <person name="Maiti R."/>
            <person name="Marra M.A."/>
            <person name="Marra R.E."/>
            <person name="Mathewson C.A."/>
            <person name="Mitchell T.G."/>
            <person name="Pertea M."/>
            <person name="Riggs F.R."/>
            <person name="Salzberg S.L."/>
            <person name="Schein J.E."/>
            <person name="Shvartsbeyn A."/>
            <person name="Shin H."/>
            <person name="Shumway M."/>
            <person name="Specht C.A."/>
            <person name="Suh B.B."/>
            <person name="Tenney A."/>
            <person name="Utterback T.R."/>
            <person name="Wickes B.L."/>
            <person name="Wortman J.R."/>
            <person name="Wye N.H."/>
            <person name="Kronstad J.W."/>
            <person name="Lodge J.K."/>
            <person name="Heitman J."/>
            <person name="Davis R.W."/>
            <person name="Fraser C.M."/>
            <person name="Hyman R.W."/>
        </authorList>
    </citation>
    <scope>NUCLEOTIDE SEQUENCE [LARGE SCALE GENOMIC DNA]</scope>
    <source>
        <strain>JEC21 / ATCC MYA-565</strain>
    </source>
</reference>
<accession>P0CP08</accession>
<accession>Q55J87</accession>
<accession>Q5KCH5</accession>
<organism>
    <name type="scientific">Cryptococcus neoformans var. neoformans serotype D (strain JEC21 / ATCC MYA-565)</name>
    <name type="common">Filobasidiella neoformans</name>
    <dbReference type="NCBI Taxonomy" id="214684"/>
    <lineage>
        <taxon>Eukaryota</taxon>
        <taxon>Fungi</taxon>
        <taxon>Dikarya</taxon>
        <taxon>Basidiomycota</taxon>
        <taxon>Agaricomycotina</taxon>
        <taxon>Tremellomycetes</taxon>
        <taxon>Tremellales</taxon>
        <taxon>Cryptococcaceae</taxon>
        <taxon>Cryptococcus</taxon>
        <taxon>Cryptococcus neoformans species complex</taxon>
    </lineage>
</organism>